<protein>
    <recommendedName>
        <fullName evidence="1">NADH-quinone oxidoreductase subunit B</fullName>
        <ecNumber evidence="1">7.1.1.-</ecNumber>
    </recommendedName>
    <alternativeName>
        <fullName evidence="1">NADH dehydrogenase I subunit B</fullName>
    </alternativeName>
    <alternativeName>
        <fullName evidence="1">NDH-1 subunit B</fullName>
    </alternativeName>
</protein>
<reference key="1">
    <citation type="journal article" date="2011" name="PLoS ONE">
        <title>The genome of Akkermansia muciniphila, a dedicated intestinal mucin degrader, and its use in exploring intestinal metagenomes.</title>
        <authorList>
            <person name="van Passel M.W."/>
            <person name="Kant R."/>
            <person name="Zoetendal E.G."/>
            <person name="Plugge C.M."/>
            <person name="Derrien M."/>
            <person name="Malfatti S.A."/>
            <person name="Chain P.S."/>
            <person name="Woyke T."/>
            <person name="Palva A."/>
            <person name="de Vos W.M."/>
            <person name="Smidt H."/>
        </authorList>
    </citation>
    <scope>NUCLEOTIDE SEQUENCE [LARGE SCALE GENOMIC DNA]</scope>
    <source>
        <strain>ATCC BAA-835 / DSM 22959 / JCM 33894 / BCRC 81048 / CCUG 64013 / CIP 107961 / Muc</strain>
    </source>
</reference>
<name>NUOB_AKKM8</name>
<feature type="chain" id="PRO_0000376116" description="NADH-quinone oxidoreductase subunit B">
    <location>
        <begin position="1"/>
        <end position="193"/>
    </location>
</feature>
<feature type="region of interest" description="Disordered" evidence="2">
    <location>
        <begin position="172"/>
        <end position="193"/>
    </location>
</feature>
<feature type="binding site" evidence="1">
    <location>
        <position position="49"/>
    </location>
    <ligand>
        <name>[4Fe-4S] cluster</name>
        <dbReference type="ChEBI" id="CHEBI:49883"/>
    </ligand>
</feature>
<feature type="binding site" evidence="1">
    <location>
        <position position="50"/>
    </location>
    <ligand>
        <name>[4Fe-4S] cluster</name>
        <dbReference type="ChEBI" id="CHEBI:49883"/>
    </ligand>
</feature>
<feature type="binding site" evidence="1">
    <location>
        <position position="115"/>
    </location>
    <ligand>
        <name>[4Fe-4S] cluster</name>
        <dbReference type="ChEBI" id="CHEBI:49883"/>
    </ligand>
</feature>
<feature type="binding site" evidence="1">
    <location>
        <position position="144"/>
    </location>
    <ligand>
        <name>[4Fe-4S] cluster</name>
        <dbReference type="ChEBI" id="CHEBI:49883"/>
    </ligand>
</feature>
<gene>
    <name evidence="1" type="primary">nuoB</name>
    <name type="ordered locus">Amuc_2157</name>
</gene>
<evidence type="ECO:0000255" key="1">
    <source>
        <dbReference type="HAMAP-Rule" id="MF_01356"/>
    </source>
</evidence>
<evidence type="ECO:0000256" key="2">
    <source>
        <dbReference type="SAM" id="MobiDB-lite"/>
    </source>
</evidence>
<proteinExistence type="inferred from homology"/>
<organism>
    <name type="scientific">Akkermansia muciniphila (strain ATCC BAA-835 / DSM 22959 / JCM 33894 / BCRC 81048 / CCUG 64013 / CIP 107961 / Muc)</name>
    <dbReference type="NCBI Taxonomy" id="349741"/>
    <lineage>
        <taxon>Bacteria</taxon>
        <taxon>Pseudomonadati</taxon>
        <taxon>Verrucomicrobiota</taxon>
        <taxon>Verrucomicrobiia</taxon>
        <taxon>Verrucomicrobiales</taxon>
        <taxon>Akkermansiaceae</taxon>
        <taxon>Akkermansia</taxon>
    </lineage>
</organism>
<dbReference type="EC" id="7.1.1.-" evidence="1"/>
<dbReference type="EMBL" id="CP001071">
    <property type="protein sequence ID" value="ACD05964.1"/>
    <property type="molecule type" value="Genomic_DNA"/>
</dbReference>
<dbReference type="RefSeq" id="WP_012421178.1">
    <property type="nucleotide sequence ID" value="NZ_CP071807.1"/>
</dbReference>
<dbReference type="SMR" id="B2UPT6"/>
<dbReference type="STRING" id="349741.Amuc_2157"/>
<dbReference type="PaxDb" id="349741-Amuc_2157"/>
<dbReference type="GeneID" id="60881745"/>
<dbReference type="KEGG" id="amu:Amuc_2157"/>
<dbReference type="eggNOG" id="COG0377">
    <property type="taxonomic scope" value="Bacteria"/>
</dbReference>
<dbReference type="HOGENOM" id="CLU_055737_7_3_0"/>
<dbReference type="OrthoDB" id="9786737at2"/>
<dbReference type="BioCyc" id="AMUC349741:G1GBX-2300-MONOMER"/>
<dbReference type="Proteomes" id="UP000001031">
    <property type="component" value="Chromosome"/>
</dbReference>
<dbReference type="GO" id="GO:0005886">
    <property type="term" value="C:plasma membrane"/>
    <property type="evidence" value="ECO:0007669"/>
    <property type="project" value="UniProtKB-SubCell"/>
</dbReference>
<dbReference type="GO" id="GO:0045271">
    <property type="term" value="C:respiratory chain complex I"/>
    <property type="evidence" value="ECO:0007669"/>
    <property type="project" value="TreeGrafter"/>
</dbReference>
<dbReference type="GO" id="GO:0051539">
    <property type="term" value="F:4 iron, 4 sulfur cluster binding"/>
    <property type="evidence" value="ECO:0007669"/>
    <property type="project" value="UniProtKB-KW"/>
</dbReference>
<dbReference type="GO" id="GO:0005506">
    <property type="term" value="F:iron ion binding"/>
    <property type="evidence" value="ECO:0007669"/>
    <property type="project" value="UniProtKB-UniRule"/>
</dbReference>
<dbReference type="GO" id="GO:0008137">
    <property type="term" value="F:NADH dehydrogenase (ubiquinone) activity"/>
    <property type="evidence" value="ECO:0007669"/>
    <property type="project" value="InterPro"/>
</dbReference>
<dbReference type="GO" id="GO:0050136">
    <property type="term" value="F:NADH:ubiquinone reductase (non-electrogenic) activity"/>
    <property type="evidence" value="ECO:0007669"/>
    <property type="project" value="UniProtKB-UniRule"/>
</dbReference>
<dbReference type="GO" id="GO:0048038">
    <property type="term" value="F:quinone binding"/>
    <property type="evidence" value="ECO:0007669"/>
    <property type="project" value="UniProtKB-KW"/>
</dbReference>
<dbReference type="GO" id="GO:0009060">
    <property type="term" value="P:aerobic respiration"/>
    <property type="evidence" value="ECO:0007669"/>
    <property type="project" value="TreeGrafter"/>
</dbReference>
<dbReference type="GO" id="GO:0015990">
    <property type="term" value="P:electron transport coupled proton transport"/>
    <property type="evidence" value="ECO:0007669"/>
    <property type="project" value="TreeGrafter"/>
</dbReference>
<dbReference type="FunFam" id="3.40.50.12280:FF:000002">
    <property type="entry name" value="NADH-quinone oxidoreductase subunit B"/>
    <property type="match status" value="1"/>
</dbReference>
<dbReference type="Gene3D" id="3.40.50.12280">
    <property type="match status" value="1"/>
</dbReference>
<dbReference type="HAMAP" id="MF_01356">
    <property type="entry name" value="NDH1_NuoB"/>
    <property type="match status" value="1"/>
</dbReference>
<dbReference type="InterPro" id="IPR006137">
    <property type="entry name" value="NADH_UbQ_OxRdtase-like_20kDa"/>
</dbReference>
<dbReference type="InterPro" id="IPR006138">
    <property type="entry name" value="NADH_UQ_OxRdtase_20Kd_su"/>
</dbReference>
<dbReference type="NCBIfam" id="TIGR01957">
    <property type="entry name" value="nuoB_fam"/>
    <property type="match status" value="1"/>
</dbReference>
<dbReference type="NCBIfam" id="NF005012">
    <property type="entry name" value="PRK06411.1"/>
    <property type="match status" value="1"/>
</dbReference>
<dbReference type="NCBIfam" id="NF011390">
    <property type="entry name" value="PRK14815.1"/>
    <property type="match status" value="1"/>
</dbReference>
<dbReference type="PANTHER" id="PTHR11995">
    <property type="entry name" value="NADH DEHYDROGENASE"/>
    <property type="match status" value="1"/>
</dbReference>
<dbReference type="PANTHER" id="PTHR11995:SF14">
    <property type="entry name" value="NADH DEHYDROGENASE [UBIQUINONE] IRON-SULFUR PROTEIN 7, MITOCHONDRIAL"/>
    <property type="match status" value="1"/>
</dbReference>
<dbReference type="Pfam" id="PF01058">
    <property type="entry name" value="Oxidored_q6"/>
    <property type="match status" value="1"/>
</dbReference>
<dbReference type="SUPFAM" id="SSF56770">
    <property type="entry name" value="HydA/Nqo6-like"/>
    <property type="match status" value="1"/>
</dbReference>
<keyword id="KW-0004">4Fe-4S</keyword>
<keyword id="KW-0997">Cell inner membrane</keyword>
<keyword id="KW-1003">Cell membrane</keyword>
<keyword id="KW-0408">Iron</keyword>
<keyword id="KW-0411">Iron-sulfur</keyword>
<keyword id="KW-0472">Membrane</keyword>
<keyword id="KW-0479">Metal-binding</keyword>
<keyword id="KW-0520">NAD</keyword>
<keyword id="KW-0874">Quinone</keyword>
<keyword id="KW-1185">Reference proteome</keyword>
<keyword id="KW-1278">Translocase</keyword>
<keyword id="KW-0813">Transport</keyword>
<keyword id="KW-0830">Ubiquinone</keyword>
<comment type="function">
    <text evidence="1">NDH-1 shuttles electrons from NADH, via FMN and iron-sulfur (Fe-S) centers, to quinones in the respiratory chain. The immediate electron acceptor for the enzyme in this species is believed to be ubiquinone. Couples the redox reaction to proton translocation (for every two electrons transferred, four hydrogen ions are translocated across the cytoplasmic membrane), and thus conserves the redox energy in a proton gradient.</text>
</comment>
<comment type="catalytic activity">
    <reaction evidence="1">
        <text>a quinone + NADH + 5 H(+)(in) = a quinol + NAD(+) + 4 H(+)(out)</text>
        <dbReference type="Rhea" id="RHEA:57888"/>
        <dbReference type="ChEBI" id="CHEBI:15378"/>
        <dbReference type="ChEBI" id="CHEBI:24646"/>
        <dbReference type="ChEBI" id="CHEBI:57540"/>
        <dbReference type="ChEBI" id="CHEBI:57945"/>
        <dbReference type="ChEBI" id="CHEBI:132124"/>
    </reaction>
</comment>
<comment type="cofactor">
    <cofactor evidence="1">
        <name>[4Fe-4S] cluster</name>
        <dbReference type="ChEBI" id="CHEBI:49883"/>
    </cofactor>
    <text evidence="1">Binds 1 [4Fe-4S] cluster.</text>
</comment>
<comment type="subunit">
    <text evidence="1">NDH-1 is composed of 14 different subunits. Subunits NuoB, C, D, E, F, and G constitute the peripheral sector of the complex.</text>
</comment>
<comment type="subcellular location">
    <subcellularLocation>
        <location evidence="1">Cell inner membrane</location>
        <topology evidence="1">Peripheral membrane protein</topology>
        <orientation evidence="1">Cytoplasmic side</orientation>
    </subcellularLocation>
</comment>
<comment type="similarity">
    <text evidence="1">Belongs to the complex I 20 kDa subunit family.</text>
</comment>
<sequence>MVTTNEPNIYETGVLDSNAEGNFVYTTLDAAINWIRKNSLWPMPMGLSCCAIEFMAVACSRYDLSRFGSEVTRFSPRQADVMIVAGTVTYKMALAVRRIWDQMPEPKWCIAMGACASTGGMFRSYSVLQGVDKILPVDVYISGCPPRPEAILEALLTLRKKLDTQQPARTFFKKEEPREANAPVPVNTEMPLE</sequence>
<accession>B2UPT6</accession>